<evidence type="ECO:0000255" key="1">
    <source>
        <dbReference type="HAMAP-Rule" id="MF_00358"/>
    </source>
</evidence>
<evidence type="ECO:0000256" key="2">
    <source>
        <dbReference type="SAM" id="MobiDB-lite"/>
    </source>
</evidence>
<evidence type="ECO:0000305" key="3"/>
<accession>B2KBX0</accession>
<reference key="1">
    <citation type="journal article" date="2009" name="Appl. Environ. Microbiol.">
        <title>Genomic analysis of 'Elusimicrobium minutum,' the first cultivated representative of the phylum 'Elusimicrobia' (formerly termite group 1).</title>
        <authorList>
            <person name="Herlemann D.P.R."/>
            <person name="Geissinger O."/>
            <person name="Ikeda-Ohtsubo W."/>
            <person name="Kunin V."/>
            <person name="Sun H."/>
            <person name="Lapidus A."/>
            <person name="Hugenholtz P."/>
            <person name="Brune A."/>
        </authorList>
    </citation>
    <scope>NUCLEOTIDE SEQUENCE [LARGE SCALE GENOMIC DNA]</scope>
    <source>
        <strain>Pei191</strain>
    </source>
</reference>
<name>RS21_ELUMP</name>
<comment type="similarity">
    <text evidence="1">Belongs to the bacterial ribosomal protein bS21 family.</text>
</comment>
<organism>
    <name type="scientific">Elusimicrobium minutum (strain Pei191)</name>
    <dbReference type="NCBI Taxonomy" id="445932"/>
    <lineage>
        <taxon>Bacteria</taxon>
        <taxon>Pseudomonadati</taxon>
        <taxon>Elusimicrobiota</taxon>
        <taxon>Elusimicrobia</taxon>
        <taxon>Elusimicrobiales</taxon>
        <taxon>Elusimicrobiaceae</taxon>
        <taxon>Elusimicrobium</taxon>
    </lineage>
</organism>
<gene>
    <name evidence="1" type="primary">rpsU</name>
    <name type="ordered locus">Emin_0314</name>
</gene>
<dbReference type="EMBL" id="CP001055">
    <property type="protein sequence ID" value="ACC97874.1"/>
    <property type="molecule type" value="Genomic_DNA"/>
</dbReference>
<dbReference type="RefSeq" id="WP_012414489.1">
    <property type="nucleotide sequence ID" value="NC_010644.1"/>
</dbReference>
<dbReference type="SMR" id="B2KBX0"/>
<dbReference type="STRING" id="445932.Emin_0314"/>
<dbReference type="KEGG" id="emi:Emin_0314"/>
<dbReference type="HOGENOM" id="CLU_159258_1_2_0"/>
<dbReference type="OrthoDB" id="9799244at2"/>
<dbReference type="Proteomes" id="UP000001029">
    <property type="component" value="Chromosome"/>
</dbReference>
<dbReference type="GO" id="GO:1990904">
    <property type="term" value="C:ribonucleoprotein complex"/>
    <property type="evidence" value="ECO:0007669"/>
    <property type="project" value="UniProtKB-KW"/>
</dbReference>
<dbReference type="GO" id="GO:0005840">
    <property type="term" value="C:ribosome"/>
    <property type="evidence" value="ECO:0007669"/>
    <property type="project" value="UniProtKB-KW"/>
</dbReference>
<dbReference type="GO" id="GO:0003735">
    <property type="term" value="F:structural constituent of ribosome"/>
    <property type="evidence" value="ECO:0007669"/>
    <property type="project" value="InterPro"/>
</dbReference>
<dbReference type="GO" id="GO:0006412">
    <property type="term" value="P:translation"/>
    <property type="evidence" value="ECO:0007669"/>
    <property type="project" value="UniProtKB-UniRule"/>
</dbReference>
<dbReference type="Gene3D" id="1.20.5.1150">
    <property type="entry name" value="Ribosomal protein S8"/>
    <property type="match status" value="1"/>
</dbReference>
<dbReference type="HAMAP" id="MF_00358">
    <property type="entry name" value="Ribosomal_bS21"/>
    <property type="match status" value="1"/>
</dbReference>
<dbReference type="InterPro" id="IPR001911">
    <property type="entry name" value="Ribosomal_bS21"/>
</dbReference>
<dbReference type="InterPro" id="IPR018278">
    <property type="entry name" value="Ribosomal_bS21_CS"/>
</dbReference>
<dbReference type="InterPro" id="IPR038380">
    <property type="entry name" value="Ribosomal_bS21_sf"/>
</dbReference>
<dbReference type="NCBIfam" id="TIGR00030">
    <property type="entry name" value="S21p"/>
    <property type="match status" value="1"/>
</dbReference>
<dbReference type="PANTHER" id="PTHR21109">
    <property type="entry name" value="MITOCHONDRIAL 28S RIBOSOMAL PROTEIN S21"/>
    <property type="match status" value="1"/>
</dbReference>
<dbReference type="PANTHER" id="PTHR21109:SF0">
    <property type="entry name" value="SMALL RIBOSOMAL SUBUNIT PROTEIN BS21M"/>
    <property type="match status" value="1"/>
</dbReference>
<dbReference type="Pfam" id="PF01165">
    <property type="entry name" value="Ribosomal_S21"/>
    <property type="match status" value="1"/>
</dbReference>
<dbReference type="PRINTS" id="PR00976">
    <property type="entry name" value="RIBOSOMALS21"/>
</dbReference>
<dbReference type="PROSITE" id="PS01181">
    <property type="entry name" value="RIBOSOMAL_S21"/>
    <property type="match status" value="1"/>
</dbReference>
<keyword id="KW-1185">Reference proteome</keyword>
<keyword id="KW-0687">Ribonucleoprotein</keyword>
<keyword id="KW-0689">Ribosomal protein</keyword>
<protein>
    <recommendedName>
        <fullName evidence="1">Small ribosomal subunit protein bS21</fullName>
    </recommendedName>
    <alternativeName>
        <fullName evidence="3">30S ribosomal protein S21</fullName>
    </alternativeName>
</protein>
<proteinExistence type="inferred from homology"/>
<feature type="chain" id="PRO_1000120620" description="Small ribosomal subunit protein bS21">
    <location>
        <begin position="1"/>
        <end position="64"/>
    </location>
</feature>
<feature type="region of interest" description="Disordered" evidence="2">
    <location>
        <begin position="40"/>
        <end position="64"/>
    </location>
</feature>
<feature type="compositionally biased region" description="Basic residues" evidence="2">
    <location>
        <begin position="55"/>
        <end position="64"/>
    </location>
</feature>
<sequence>MVFVKVRDAEHLEEALKRFKRECEKNGILKEIKRRETYMPPSVKRKIKSQEAQRRMRRTKRKRF</sequence>